<evidence type="ECO:0000250" key="1">
    <source>
        <dbReference type="UniProtKB" id="Q7Z7L7"/>
    </source>
</evidence>
<evidence type="ECO:0000305" key="2"/>
<gene>
    <name type="ORF">CG12084</name>
</gene>
<sequence length="793" mass="90366">MSCKVRLMEDGSLDEEPLTLKEIAYQKLCNNLDIISSHRPDGQRGLNPGIVLPNEICDGFLENYQRFNRPLDDSVIRLFEDTHRTSLKIVNLRNSTLSSIGLETLMRHKLFALSLWYCDMISVGSHHLLAHYGDSLRSLELGISSHLLQYAEPNEKEPVDFQLTCPHLRRLVLNGVVMHHRLQFAHLHDLGHLDLTSCVLANFSLEALGSLPNLHTLILFNVWPIANQLHAICCLRRLCTLDISISSSGNGHGTYDLPDQTLEMLMDNLRHLTHLDISGTNLAGNGVATKESTTTSGMQQSPKMEQHFALTDIPGLASRTQRPLQFLGLYHTAHWACKRHDIPALEVAGDANEQQILTAARYYHDRPVLLTRVLNDLYHLFRFENCKDIHTALDVVLSAMDRHLKFKHMQISGSATLFYIVKGRDRSKFGALLRNHIIRTLLNGMEMHITDDTMLRNGYLTLTQFHMPVDVLFEYERLIKILLHGVSKTEQEGFVQRIAIYLLNTLACQVDGRQKLFLGELGVVSTMFTLIKDRLTRSVFDDVMEVAWSTMWNVTDETAINCKRFLDGRGMEYFLKCLHTFPDRDELLRNMMGLLGNVAEVKWLRPKLMTQEFIEVFARLLDSLSDGIEVGGASASVVARVREREMASANHAYLRFQVSYNAAGVLAHIASDGADAWTIKTPSREHVLERMVAAIQRWNIKSERNINYRSFEPILSLVRCYETPQCQHWAVWALANLTQVYPEKYCKLVEQENGIQILNELIEHESPYCEIKRIARLVIEQCDSGSERMVVDG</sequence>
<accession>Q9W0E8</accession>
<dbReference type="EMBL" id="AE014296">
    <property type="protein sequence ID" value="AAF47500.2"/>
    <property type="molecule type" value="Genomic_DNA"/>
</dbReference>
<dbReference type="EMBL" id="AY128434">
    <property type="protein sequence ID" value="AAM75027.1"/>
    <property type="molecule type" value="mRNA"/>
</dbReference>
<dbReference type="RefSeq" id="NP_612112.1">
    <property type="nucleotide sequence ID" value="NM_138268.2"/>
</dbReference>
<dbReference type="SMR" id="Q9W0E8"/>
<dbReference type="BioGRID" id="72971">
    <property type="interactions" value="11"/>
</dbReference>
<dbReference type="FunCoup" id="Q9W0E8">
    <property type="interactions" value="291"/>
</dbReference>
<dbReference type="IntAct" id="Q9W0E8">
    <property type="interactions" value="11"/>
</dbReference>
<dbReference type="STRING" id="7227.FBpp0072595"/>
<dbReference type="PaxDb" id="7227-FBpp0072595"/>
<dbReference type="DNASU" id="192509"/>
<dbReference type="EnsemblMetazoa" id="FBtr0072711">
    <property type="protein sequence ID" value="FBpp0072595"/>
    <property type="gene ID" value="FBgn0043458"/>
</dbReference>
<dbReference type="GeneID" id="192509"/>
<dbReference type="KEGG" id="dme:Dmel_CG12084"/>
<dbReference type="UCSC" id="CG12084-RA">
    <property type="organism name" value="d. melanogaster"/>
</dbReference>
<dbReference type="AGR" id="FB:FBgn0043458"/>
<dbReference type="FlyBase" id="FBgn0043458">
    <property type="gene designation" value="CG12084"/>
</dbReference>
<dbReference type="VEuPathDB" id="VectorBase:FBgn0043458"/>
<dbReference type="eggNOG" id="KOG3665">
    <property type="taxonomic scope" value="Eukaryota"/>
</dbReference>
<dbReference type="GeneTree" id="ENSGT00530000063187"/>
<dbReference type="InParanoid" id="Q9W0E8"/>
<dbReference type="OMA" id="QIRRKHA"/>
<dbReference type="OrthoDB" id="5783533at2759"/>
<dbReference type="PhylomeDB" id="Q9W0E8"/>
<dbReference type="BioGRID-ORCS" id="192509">
    <property type="hits" value="0 hits in 1 CRISPR screen"/>
</dbReference>
<dbReference type="ChiTaRS" id="CG12084">
    <property type="organism name" value="fly"/>
</dbReference>
<dbReference type="GenomeRNAi" id="192509"/>
<dbReference type="PRO" id="PR:Q9W0E8"/>
<dbReference type="Proteomes" id="UP000000803">
    <property type="component" value="Chromosome 3L"/>
</dbReference>
<dbReference type="Bgee" id="FBgn0043458">
    <property type="expression patterns" value="Expressed in eye photoreceptor cell (Drosophila) in open tracheal system trachea and 208 other cell types or tissues"/>
</dbReference>
<dbReference type="ExpressionAtlas" id="Q9W0E8">
    <property type="expression patterns" value="baseline and differential"/>
</dbReference>
<dbReference type="GO" id="GO:0031462">
    <property type="term" value="C:Cul2-RING ubiquitin ligase complex"/>
    <property type="evidence" value="ECO:0000250"/>
    <property type="project" value="UniProtKB"/>
</dbReference>
<dbReference type="FunFam" id="1.25.10.10:FF:000111">
    <property type="entry name" value="Protein zer-1 homolog"/>
    <property type="match status" value="1"/>
</dbReference>
<dbReference type="FunFam" id="3.80.10.10:FF:000758">
    <property type="entry name" value="Uncharacterized protein, isoform A"/>
    <property type="match status" value="1"/>
</dbReference>
<dbReference type="Gene3D" id="1.25.10.10">
    <property type="entry name" value="Leucine-rich Repeat Variant"/>
    <property type="match status" value="1"/>
</dbReference>
<dbReference type="Gene3D" id="3.80.10.10">
    <property type="entry name" value="Ribonuclease Inhibitor"/>
    <property type="match status" value="1"/>
</dbReference>
<dbReference type="InterPro" id="IPR011989">
    <property type="entry name" value="ARM-like"/>
</dbReference>
<dbReference type="InterPro" id="IPR016024">
    <property type="entry name" value="ARM-type_fold"/>
</dbReference>
<dbReference type="InterPro" id="IPR032675">
    <property type="entry name" value="LRR_dom_sf"/>
</dbReference>
<dbReference type="InterPro" id="IPR056845">
    <property type="entry name" value="LRR_Zer-1"/>
</dbReference>
<dbReference type="InterPro" id="IPR055142">
    <property type="entry name" value="ZER1-like_C"/>
</dbReference>
<dbReference type="InterPro" id="IPR051341">
    <property type="entry name" value="Zyg-11_UBL_adapter"/>
</dbReference>
<dbReference type="PANTHER" id="PTHR12904">
    <property type="match status" value="1"/>
</dbReference>
<dbReference type="PANTHER" id="PTHR12904:SF23">
    <property type="entry name" value="PROTEIN ZER-1 HOMOLOG"/>
    <property type="match status" value="1"/>
</dbReference>
<dbReference type="Pfam" id="PF25013">
    <property type="entry name" value="LRR_Zer-1"/>
    <property type="match status" value="1"/>
</dbReference>
<dbReference type="Pfam" id="PF22964">
    <property type="entry name" value="ZER1-like_2nd"/>
    <property type="match status" value="2"/>
</dbReference>
<dbReference type="SUPFAM" id="SSF48371">
    <property type="entry name" value="ARM repeat"/>
    <property type="match status" value="1"/>
</dbReference>
<dbReference type="SUPFAM" id="SSF52047">
    <property type="entry name" value="RNI-like"/>
    <property type="match status" value="1"/>
</dbReference>
<reference key="1">
    <citation type="journal article" date="2000" name="Science">
        <title>The genome sequence of Drosophila melanogaster.</title>
        <authorList>
            <person name="Adams M.D."/>
            <person name="Celniker S.E."/>
            <person name="Holt R.A."/>
            <person name="Evans C.A."/>
            <person name="Gocayne J.D."/>
            <person name="Amanatides P.G."/>
            <person name="Scherer S.E."/>
            <person name="Li P.W."/>
            <person name="Hoskins R.A."/>
            <person name="Galle R.F."/>
            <person name="George R.A."/>
            <person name="Lewis S.E."/>
            <person name="Richards S."/>
            <person name="Ashburner M."/>
            <person name="Henderson S.N."/>
            <person name="Sutton G.G."/>
            <person name="Wortman J.R."/>
            <person name="Yandell M.D."/>
            <person name="Zhang Q."/>
            <person name="Chen L.X."/>
            <person name="Brandon R.C."/>
            <person name="Rogers Y.-H.C."/>
            <person name="Blazej R.G."/>
            <person name="Champe M."/>
            <person name="Pfeiffer B.D."/>
            <person name="Wan K.H."/>
            <person name="Doyle C."/>
            <person name="Baxter E.G."/>
            <person name="Helt G."/>
            <person name="Nelson C.R."/>
            <person name="Miklos G.L.G."/>
            <person name="Abril J.F."/>
            <person name="Agbayani A."/>
            <person name="An H.-J."/>
            <person name="Andrews-Pfannkoch C."/>
            <person name="Baldwin D."/>
            <person name="Ballew R.M."/>
            <person name="Basu A."/>
            <person name="Baxendale J."/>
            <person name="Bayraktaroglu L."/>
            <person name="Beasley E.M."/>
            <person name="Beeson K.Y."/>
            <person name="Benos P.V."/>
            <person name="Berman B.P."/>
            <person name="Bhandari D."/>
            <person name="Bolshakov S."/>
            <person name="Borkova D."/>
            <person name="Botchan M.R."/>
            <person name="Bouck J."/>
            <person name="Brokstein P."/>
            <person name="Brottier P."/>
            <person name="Burtis K.C."/>
            <person name="Busam D.A."/>
            <person name="Butler H."/>
            <person name="Cadieu E."/>
            <person name="Center A."/>
            <person name="Chandra I."/>
            <person name="Cherry J.M."/>
            <person name="Cawley S."/>
            <person name="Dahlke C."/>
            <person name="Davenport L.B."/>
            <person name="Davies P."/>
            <person name="de Pablos B."/>
            <person name="Delcher A."/>
            <person name="Deng Z."/>
            <person name="Mays A.D."/>
            <person name="Dew I."/>
            <person name="Dietz S.M."/>
            <person name="Dodson K."/>
            <person name="Doup L.E."/>
            <person name="Downes M."/>
            <person name="Dugan-Rocha S."/>
            <person name="Dunkov B.C."/>
            <person name="Dunn P."/>
            <person name="Durbin K.J."/>
            <person name="Evangelista C.C."/>
            <person name="Ferraz C."/>
            <person name="Ferriera S."/>
            <person name="Fleischmann W."/>
            <person name="Fosler C."/>
            <person name="Gabrielian A.E."/>
            <person name="Garg N.S."/>
            <person name="Gelbart W.M."/>
            <person name="Glasser K."/>
            <person name="Glodek A."/>
            <person name="Gong F."/>
            <person name="Gorrell J.H."/>
            <person name="Gu Z."/>
            <person name="Guan P."/>
            <person name="Harris M."/>
            <person name="Harris N.L."/>
            <person name="Harvey D.A."/>
            <person name="Heiman T.J."/>
            <person name="Hernandez J.R."/>
            <person name="Houck J."/>
            <person name="Hostin D."/>
            <person name="Houston K.A."/>
            <person name="Howland T.J."/>
            <person name="Wei M.-H."/>
            <person name="Ibegwam C."/>
            <person name="Jalali M."/>
            <person name="Kalush F."/>
            <person name="Karpen G.H."/>
            <person name="Ke Z."/>
            <person name="Kennison J.A."/>
            <person name="Ketchum K.A."/>
            <person name="Kimmel B.E."/>
            <person name="Kodira C.D."/>
            <person name="Kraft C.L."/>
            <person name="Kravitz S."/>
            <person name="Kulp D."/>
            <person name="Lai Z."/>
            <person name="Lasko P."/>
            <person name="Lei Y."/>
            <person name="Levitsky A.A."/>
            <person name="Li J.H."/>
            <person name="Li Z."/>
            <person name="Liang Y."/>
            <person name="Lin X."/>
            <person name="Liu X."/>
            <person name="Mattei B."/>
            <person name="McIntosh T.C."/>
            <person name="McLeod M.P."/>
            <person name="McPherson D."/>
            <person name="Merkulov G."/>
            <person name="Milshina N.V."/>
            <person name="Mobarry C."/>
            <person name="Morris J."/>
            <person name="Moshrefi A."/>
            <person name="Mount S.M."/>
            <person name="Moy M."/>
            <person name="Murphy B."/>
            <person name="Murphy L."/>
            <person name="Muzny D.M."/>
            <person name="Nelson D.L."/>
            <person name="Nelson D.R."/>
            <person name="Nelson K.A."/>
            <person name="Nixon K."/>
            <person name="Nusskern D.R."/>
            <person name="Pacleb J.M."/>
            <person name="Palazzolo M."/>
            <person name="Pittman G.S."/>
            <person name="Pan S."/>
            <person name="Pollard J."/>
            <person name="Puri V."/>
            <person name="Reese M.G."/>
            <person name="Reinert K."/>
            <person name="Remington K."/>
            <person name="Saunders R.D.C."/>
            <person name="Scheeler F."/>
            <person name="Shen H."/>
            <person name="Shue B.C."/>
            <person name="Siden-Kiamos I."/>
            <person name="Simpson M."/>
            <person name="Skupski M.P."/>
            <person name="Smith T.J."/>
            <person name="Spier E."/>
            <person name="Spradling A.C."/>
            <person name="Stapleton M."/>
            <person name="Strong R."/>
            <person name="Sun E."/>
            <person name="Svirskas R."/>
            <person name="Tector C."/>
            <person name="Turner R."/>
            <person name="Venter E."/>
            <person name="Wang A.H."/>
            <person name="Wang X."/>
            <person name="Wang Z.-Y."/>
            <person name="Wassarman D.A."/>
            <person name="Weinstock G.M."/>
            <person name="Weissenbach J."/>
            <person name="Williams S.M."/>
            <person name="Woodage T."/>
            <person name="Worley K.C."/>
            <person name="Wu D."/>
            <person name="Yang S."/>
            <person name="Yao Q.A."/>
            <person name="Ye J."/>
            <person name="Yeh R.-F."/>
            <person name="Zaveri J.S."/>
            <person name="Zhan M."/>
            <person name="Zhang G."/>
            <person name="Zhao Q."/>
            <person name="Zheng L."/>
            <person name="Zheng X.H."/>
            <person name="Zhong F.N."/>
            <person name="Zhong W."/>
            <person name="Zhou X."/>
            <person name="Zhu S.C."/>
            <person name="Zhu X."/>
            <person name="Smith H.O."/>
            <person name="Gibbs R.A."/>
            <person name="Myers E.W."/>
            <person name="Rubin G.M."/>
            <person name="Venter J.C."/>
        </authorList>
    </citation>
    <scope>NUCLEOTIDE SEQUENCE [LARGE SCALE GENOMIC DNA]</scope>
    <source>
        <strain>Berkeley</strain>
    </source>
</reference>
<reference key="2">
    <citation type="journal article" date="2002" name="Genome Biol.">
        <title>Annotation of the Drosophila melanogaster euchromatic genome: a systematic review.</title>
        <authorList>
            <person name="Misra S."/>
            <person name="Crosby M.A."/>
            <person name="Mungall C.J."/>
            <person name="Matthews B.B."/>
            <person name="Campbell K.S."/>
            <person name="Hradecky P."/>
            <person name="Huang Y."/>
            <person name="Kaminker J.S."/>
            <person name="Millburn G.H."/>
            <person name="Prochnik S.E."/>
            <person name="Smith C.D."/>
            <person name="Tupy J.L."/>
            <person name="Whitfield E.J."/>
            <person name="Bayraktaroglu L."/>
            <person name="Berman B.P."/>
            <person name="Bettencourt B.R."/>
            <person name="Celniker S.E."/>
            <person name="de Grey A.D.N.J."/>
            <person name="Drysdale R.A."/>
            <person name="Harris N.L."/>
            <person name="Richter J."/>
            <person name="Russo S."/>
            <person name="Schroeder A.J."/>
            <person name="Shu S.Q."/>
            <person name="Stapleton M."/>
            <person name="Yamada C."/>
            <person name="Ashburner M."/>
            <person name="Gelbart W.M."/>
            <person name="Rubin G.M."/>
            <person name="Lewis S.E."/>
        </authorList>
    </citation>
    <scope>GENOME REANNOTATION</scope>
    <source>
        <strain>Berkeley</strain>
    </source>
</reference>
<reference key="3">
    <citation type="journal article" date="2002" name="Genome Biol.">
        <title>A Drosophila full-length cDNA resource.</title>
        <authorList>
            <person name="Stapleton M."/>
            <person name="Carlson J.W."/>
            <person name="Brokstein P."/>
            <person name="Yu C."/>
            <person name="Champe M."/>
            <person name="George R.A."/>
            <person name="Guarin H."/>
            <person name="Kronmiller B."/>
            <person name="Pacleb J.M."/>
            <person name="Park S."/>
            <person name="Wan K.H."/>
            <person name="Rubin G.M."/>
            <person name="Celniker S.E."/>
        </authorList>
    </citation>
    <scope>NUCLEOTIDE SEQUENCE [LARGE SCALE MRNA]</scope>
    <source>
        <strain>Berkeley</strain>
        <tissue>Embryo</tissue>
    </source>
</reference>
<reference key="4">
    <citation type="journal article" date="2007" name="EMBO Rep.">
        <title>The Caenorhabditis elegans cell-cycle regulator ZYG-11 defines a conserved family of CUL-2 complex components.</title>
        <authorList>
            <person name="Vasudevan S."/>
            <person name="Starostina N.G."/>
            <person name="Kipreos E.T."/>
        </authorList>
    </citation>
    <scope>IDENTIFICATION</scope>
</reference>
<protein>
    <recommendedName>
        <fullName>Protein zer-1 homolog</fullName>
    </recommendedName>
    <alternativeName>
        <fullName>Zyg-11 homolog B-like protein</fullName>
    </alternativeName>
</protein>
<comment type="function">
    <text evidence="1">Serves as substrate adapter subunit in an E3 ubiquitin ligase complex CG12084-cul-2-elongin BC. Targets substrates bearing N-terminal glycine degrons for proteasomal degradation.</text>
</comment>
<comment type="similarity">
    <text evidence="2">Belongs to the zyg-11 family.</text>
</comment>
<organism>
    <name type="scientific">Drosophila melanogaster</name>
    <name type="common">Fruit fly</name>
    <dbReference type="NCBI Taxonomy" id="7227"/>
    <lineage>
        <taxon>Eukaryota</taxon>
        <taxon>Metazoa</taxon>
        <taxon>Ecdysozoa</taxon>
        <taxon>Arthropoda</taxon>
        <taxon>Hexapoda</taxon>
        <taxon>Insecta</taxon>
        <taxon>Pterygota</taxon>
        <taxon>Neoptera</taxon>
        <taxon>Endopterygota</taxon>
        <taxon>Diptera</taxon>
        <taxon>Brachycera</taxon>
        <taxon>Muscomorpha</taxon>
        <taxon>Ephydroidea</taxon>
        <taxon>Drosophilidae</taxon>
        <taxon>Drosophila</taxon>
        <taxon>Sophophora</taxon>
    </lineage>
</organism>
<feature type="chain" id="PRO_0000305092" description="Protein zer-1 homolog">
    <location>
        <begin position="1"/>
        <end position="793"/>
    </location>
</feature>
<feature type="repeat" description="LRR 1">
    <location>
        <begin position="84"/>
        <end position="108"/>
    </location>
</feature>
<feature type="repeat" description="LRR 2">
    <location>
        <begin position="187"/>
        <end position="210"/>
    </location>
</feature>
<feature type="repeat" description="LRR 3">
    <location>
        <begin position="269"/>
        <end position="294"/>
    </location>
</feature>
<keyword id="KW-0433">Leucine-rich repeat</keyword>
<keyword id="KW-1185">Reference proteome</keyword>
<keyword id="KW-0677">Repeat</keyword>
<keyword id="KW-0833">Ubl conjugation pathway</keyword>
<name>ZER1_DROME</name>
<proteinExistence type="evidence at transcript level"/>